<gene>
    <name evidence="1" type="primary">mraZ</name>
    <name type="ordered locus">BceJ2315_34090</name>
    <name type="ORF">BCAL3471</name>
</gene>
<reference key="1">
    <citation type="journal article" date="2009" name="J. Bacteriol.">
        <title>The genome of Burkholderia cenocepacia J2315, an epidemic pathogen of cystic fibrosis patients.</title>
        <authorList>
            <person name="Holden M.T."/>
            <person name="Seth-Smith H.M."/>
            <person name="Crossman L.C."/>
            <person name="Sebaihia M."/>
            <person name="Bentley S.D."/>
            <person name="Cerdeno-Tarraga A.M."/>
            <person name="Thomson N.R."/>
            <person name="Bason N."/>
            <person name="Quail M.A."/>
            <person name="Sharp S."/>
            <person name="Cherevach I."/>
            <person name="Churcher C."/>
            <person name="Goodhead I."/>
            <person name="Hauser H."/>
            <person name="Holroyd N."/>
            <person name="Mungall K."/>
            <person name="Scott P."/>
            <person name="Walker D."/>
            <person name="White B."/>
            <person name="Rose H."/>
            <person name="Iversen P."/>
            <person name="Mil-Homens D."/>
            <person name="Rocha E.P."/>
            <person name="Fialho A.M."/>
            <person name="Baldwin A."/>
            <person name="Dowson C."/>
            <person name="Barrell B.G."/>
            <person name="Govan J.R."/>
            <person name="Vandamme P."/>
            <person name="Hart C.A."/>
            <person name="Mahenthiralingam E."/>
            <person name="Parkhill J."/>
        </authorList>
    </citation>
    <scope>NUCLEOTIDE SEQUENCE [LARGE SCALE GENOMIC DNA]</scope>
    <source>
        <strain>ATCC BAA-245 / DSM 16553 / LMG 16656 / NCTC 13227 / J2315 / CF5610</strain>
    </source>
</reference>
<comment type="subunit">
    <text evidence="1">Forms oligomers.</text>
</comment>
<comment type="subcellular location">
    <subcellularLocation>
        <location evidence="1">Cytoplasm</location>
        <location evidence="1">Nucleoid</location>
    </subcellularLocation>
</comment>
<comment type="similarity">
    <text evidence="1">Belongs to the MraZ family.</text>
</comment>
<name>MRAZ_BURCJ</name>
<keyword id="KW-0963">Cytoplasm</keyword>
<keyword id="KW-0238">DNA-binding</keyword>
<keyword id="KW-0677">Repeat</keyword>
<keyword id="KW-0804">Transcription</keyword>
<keyword id="KW-0805">Transcription regulation</keyword>
<protein>
    <recommendedName>
        <fullName>Transcriptional regulator MraZ</fullName>
    </recommendedName>
</protein>
<proteinExistence type="inferred from homology"/>
<sequence length="142" mass="15869">MFQGASALTLDAKGRMSVPARYREALQGQAEGRVTVTKHPDGCLLLFPRPEWEVFRAKIAALPMDAHWWRRIFLGNAMDVDLDSAGRILVSPELRMAAGLEKEVMLLGMGSHFELWDSQTYNAKEQAAMAQGMPDALKNFTF</sequence>
<evidence type="ECO:0000255" key="1">
    <source>
        <dbReference type="HAMAP-Rule" id="MF_01008"/>
    </source>
</evidence>
<evidence type="ECO:0000255" key="2">
    <source>
        <dbReference type="PROSITE-ProRule" id="PRU01076"/>
    </source>
</evidence>
<dbReference type="EMBL" id="AM747720">
    <property type="protein sequence ID" value="CAR53794.1"/>
    <property type="molecule type" value="Genomic_DNA"/>
</dbReference>
<dbReference type="RefSeq" id="WP_006487094.1">
    <property type="nucleotide sequence ID" value="NC_011000.1"/>
</dbReference>
<dbReference type="SMR" id="B4E6K1"/>
<dbReference type="GeneID" id="98106606"/>
<dbReference type="KEGG" id="bcj:BCAL3471"/>
<dbReference type="eggNOG" id="COG2001">
    <property type="taxonomic scope" value="Bacteria"/>
</dbReference>
<dbReference type="HOGENOM" id="CLU_107907_2_1_4"/>
<dbReference type="BioCyc" id="BCEN216591:G1G1V-3859-MONOMER"/>
<dbReference type="Proteomes" id="UP000001035">
    <property type="component" value="Chromosome 1"/>
</dbReference>
<dbReference type="GO" id="GO:0005737">
    <property type="term" value="C:cytoplasm"/>
    <property type="evidence" value="ECO:0007669"/>
    <property type="project" value="UniProtKB-UniRule"/>
</dbReference>
<dbReference type="GO" id="GO:0009295">
    <property type="term" value="C:nucleoid"/>
    <property type="evidence" value="ECO:0007669"/>
    <property type="project" value="UniProtKB-SubCell"/>
</dbReference>
<dbReference type="GO" id="GO:0003700">
    <property type="term" value="F:DNA-binding transcription factor activity"/>
    <property type="evidence" value="ECO:0007669"/>
    <property type="project" value="UniProtKB-UniRule"/>
</dbReference>
<dbReference type="GO" id="GO:0000976">
    <property type="term" value="F:transcription cis-regulatory region binding"/>
    <property type="evidence" value="ECO:0007669"/>
    <property type="project" value="TreeGrafter"/>
</dbReference>
<dbReference type="GO" id="GO:2000143">
    <property type="term" value="P:negative regulation of DNA-templated transcription initiation"/>
    <property type="evidence" value="ECO:0007669"/>
    <property type="project" value="TreeGrafter"/>
</dbReference>
<dbReference type="CDD" id="cd16321">
    <property type="entry name" value="MraZ_C"/>
    <property type="match status" value="1"/>
</dbReference>
<dbReference type="CDD" id="cd16320">
    <property type="entry name" value="MraZ_N"/>
    <property type="match status" value="1"/>
</dbReference>
<dbReference type="Gene3D" id="3.40.1550.20">
    <property type="entry name" value="Transcriptional regulator MraZ domain"/>
    <property type="match status" value="1"/>
</dbReference>
<dbReference type="HAMAP" id="MF_01008">
    <property type="entry name" value="MraZ"/>
    <property type="match status" value="1"/>
</dbReference>
<dbReference type="InterPro" id="IPR003444">
    <property type="entry name" value="MraZ"/>
</dbReference>
<dbReference type="InterPro" id="IPR035644">
    <property type="entry name" value="MraZ_C"/>
</dbReference>
<dbReference type="InterPro" id="IPR020603">
    <property type="entry name" value="MraZ_dom"/>
</dbReference>
<dbReference type="InterPro" id="IPR035642">
    <property type="entry name" value="MraZ_N"/>
</dbReference>
<dbReference type="InterPro" id="IPR038619">
    <property type="entry name" value="MraZ_sf"/>
</dbReference>
<dbReference type="InterPro" id="IPR007159">
    <property type="entry name" value="SpoVT-AbrB_dom"/>
</dbReference>
<dbReference type="InterPro" id="IPR037914">
    <property type="entry name" value="SpoVT-AbrB_sf"/>
</dbReference>
<dbReference type="NCBIfam" id="TIGR00242">
    <property type="entry name" value="division/cell wall cluster transcriptional repressor MraZ"/>
    <property type="match status" value="1"/>
</dbReference>
<dbReference type="PANTHER" id="PTHR34701">
    <property type="entry name" value="TRANSCRIPTIONAL REGULATOR MRAZ"/>
    <property type="match status" value="1"/>
</dbReference>
<dbReference type="PANTHER" id="PTHR34701:SF1">
    <property type="entry name" value="TRANSCRIPTIONAL REGULATOR MRAZ"/>
    <property type="match status" value="1"/>
</dbReference>
<dbReference type="Pfam" id="PF02381">
    <property type="entry name" value="MraZ"/>
    <property type="match status" value="2"/>
</dbReference>
<dbReference type="SUPFAM" id="SSF89447">
    <property type="entry name" value="AbrB/MazE/MraZ-like"/>
    <property type="match status" value="1"/>
</dbReference>
<dbReference type="PROSITE" id="PS51740">
    <property type="entry name" value="SPOVT_ABRB"/>
    <property type="match status" value="2"/>
</dbReference>
<accession>B4E6K1</accession>
<organism>
    <name type="scientific">Burkholderia cenocepacia (strain ATCC BAA-245 / DSM 16553 / LMG 16656 / NCTC 13227 / J2315 / CF5610)</name>
    <name type="common">Burkholderia cepacia (strain J2315)</name>
    <dbReference type="NCBI Taxonomy" id="216591"/>
    <lineage>
        <taxon>Bacteria</taxon>
        <taxon>Pseudomonadati</taxon>
        <taxon>Pseudomonadota</taxon>
        <taxon>Betaproteobacteria</taxon>
        <taxon>Burkholderiales</taxon>
        <taxon>Burkholderiaceae</taxon>
        <taxon>Burkholderia</taxon>
        <taxon>Burkholderia cepacia complex</taxon>
    </lineage>
</organism>
<feature type="chain" id="PRO_1000134774" description="Transcriptional regulator MraZ">
    <location>
        <begin position="1"/>
        <end position="142"/>
    </location>
</feature>
<feature type="domain" description="SpoVT-AbrB 1" evidence="2">
    <location>
        <begin position="5"/>
        <end position="51"/>
    </location>
</feature>
<feature type="domain" description="SpoVT-AbrB 2" evidence="2">
    <location>
        <begin position="77"/>
        <end position="120"/>
    </location>
</feature>